<comment type="function">
    <text evidence="1">Specifically catalyzes the cleavage of the D-lactyl ether substituent of MurNAc 6-phosphate, producing GlcNAc 6-phosphate and D-lactate.</text>
</comment>
<comment type="catalytic activity">
    <reaction evidence="1">
        <text>N-acetyl-D-muramate 6-phosphate + H2O = N-acetyl-D-glucosamine 6-phosphate + (R)-lactate</text>
        <dbReference type="Rhea" id="RHEA:26410"/>
        <dbReference type="ChEBI" id="CHEBI:15377"/>
        <dbReference type="ChEBI" id="CHEBI:16004"/>
        <dbReference type="ChEBI" id="CHEBI:57513"/>
        <dbReference type="ChEBI" id="CHEBI:58722"/>
        <dbReference type="EC" id="4.2.1.126"/>
    </reaction>
</comment>
<comment type="pathway">
    <text evidence="1">Amino-sugar metabolism; N-acetylmuramate degradation.</text>
</comment>
<comment type="subunit">
    <text evidence="1">Homodimer.</text>
</comment>
<comment type="miscellaneous">
    <text evidence="1">A lyase-type mechanism (elimination/hydration) is suggested for the cleavage of the lactyl ether bond of MurNAc 6-phosphate, with the formation of an alpha,beta-unsaturated aldehyde intermediate with (E)-stereochemistry, followed by the syn addition of water to give product.</text>
</comment>
<comment type="similarity">
    <text evidence="1">Belongs to the GCKR-like family. MurNAc-6-P etherase subfamily.</text>
</comment>
<feature type="chain" id="PRO_0000249671" description="N-acetylmuramic acid 6-phosphate etherase">
    <location>
        <begin position="1"/>
        <end position="316"/>
    </location>
</feature>
<feature type="domain" description="SIS" evidence="1">
    <location>
        <begin position="66"/>
        <end position="229"/>
    </location>
</feature>
<feature type="region of interest" description="Disordered" evidence="2">
    <location>
        <begin position="1"/>
        <end position="25"/>
    </location>
</feature>
<feature type="active site" description="Proton donor" evidence="1">
    <location>
        <position position="94"/>
    </location>
</feature>
<feature type="active site" evidence="1">
    <location>
        <position position="125"/>
    </location>
</feature>
<gene>
    <name evidence="1" type="primary">murQ</name>
    <name type="ordered locus">Syncc9605_1393</name>
</gene>
<accession>Q3AJT5</accession>
<keyword id="KW-0119">Carbohydrate metabolism</keyword>
<keyword id="KW-0456">Lyase</keyword>
<proteinExistence type="inferred from homology"/>
<name>MURQ_SYNSC</name>
<organism>
    <name type="scientific">Synechococcus sp. (strain CC9605)</name>
    <dbReference type="NCBI Taxonomy" id="110662"/>
    <lineage>
        <taxon>Bacteria</taxon>
        <taxon>Bacillati</taxon>
        <taxon>Cyanobacteriota</taxon>
        <taxon>Cyanophyceae</taxon>
        <taxon>Synechococcales</taxon>
        <taxon>Synechococcaceae</taxon>
        <taxon>Synechococcus</taxon>
    </lineage>
</organism>
<dbReference type="EC" id="4.2.1.126" evidence="1"/>
<dbReference type="EMBL" id="CP000110">
    <property type="protein sequence ID" value="ABB35147.1"/>
    <property type="molecule type" value="Genomic_DNA"/>
</dbReference>
<dbReference type="RefSeq" id="WP_011364364.1">
    <property type="nucleotide sequence ID" value="NC_007516.1"/>
</dbReference>
<dbReference type="SMR" id="Q3AJT5"/>
<dbReference type="STRING" id="110662.Syncc9605_1393"/>
<dbReference type="KEGG" id="syd:Syncc9605_1393"/>
<dbReference type="eggNOG" id="COG2103">
    <property type="taxonomic scope" value="Bacteria"/>
</dbReference>
<dbReference type="HOGENOM" id="CLU_049049_1_1_3"/>
<dbReference type="OrthoDB" id="9813395at2"/>
<dbReference type="UniPathway" id="UPA00342"/>
<dbReference type="GO" id="GO:0097367">
    <property type="term" value="F:carbohydrate derivative binding"/>
    <property type="evidence" value="ECO:0007669"/>
    <property type="project" value="InterPro"/>
</dbReference>
<dbReference type="GO" id="GO:0016835">
    <property type="term" value="F:carbon-oxygen lyase activity"/>
    <property type="evidence" value="ECO:0007669"/>
    <property type="project" value="UniProtKB-UniRule"/>
</dbReference>
<dbReference type="GO" id="GO:0016803">
    <property type="term" value="F:ether hydrolase activity"/>
    <property type="evidence" value="ECO:0007669"/>
    <property type="project" value="TreeGrafter"/>
</dbReference>
<dbReference type="GO" id="GO:0046348">
    <property type="term" value="P:amino sugar catabolic process"/>
    <property type="evidence" value="ECO:0007669"/>
    <property type="project" value="InterPro"/>
</dbReference>
<dbReference type="GO" id="GO:0097173">
    <property type="term" value="P:N-acetylmuramic acid catabolic process"/>
    <property type="evidence" value="ECO:0007669"/>
    <property type="project" value="UniProtKB-UniPathway"/>
</dbReference>
<dbReference type="GO" id="GO:0009254">
    <property type="term" value="P:peptidoglycan turnover"/>
    <property type="evidence" value="ECO:0007669"/>
    <property type="project" value="TreeGrafter"/>
</dbReference>
<dbReference type="CDD" id="cd05007">
    <property type="entry name" value="SIS_Etherase"/>
    <property type="match status" value="1"/>
</dbReference>
<dbReference type="FunFam" id="3.40.50.10490:FF:000014">
    <property type="entry name" value="N-acetylmuramic acid 6-phosphate etherase"/>
    <property type="match status" value="1"/>
</dbReference>
<dbReference type="Gene3D" id="1.10.8.1080">
    <property type="match status" value="1"/>
</dbReference>
<dbReference type="Gene3D" id="3.40.50.10490">
    <property type="entry name" value="Glucose-6-phosphate isomerase like protein, domain 1"/>
    <property type="match status" value="1"/>
</dbReference>
<dbReference type="HAMAP" id="MF_00068">
    <property type="entry name" value="MurQ"/>
    <property type="match status" value="1"/>
</dbReference>
<dbReference type="InterPro" id="IPR005488">
    <property type="entry name" value="Etherase_MurQ"/>
</dbReference>
<dbReference type="InterPro" id="IPR005486">
    <property type="entry name" value="Glucokinase_regulatory_CS"/>
</dbReference>
<dbReference type="InterPro" id="IPR040190">
    <property type="entry name" value="MURQ/GCKR"/>
</dbReference>
<dbReference type="InterPro" id="IPR001347">
    <property type="entry name" value="SIS_dom"/>
</dbReference>
<dbReference type="InterPro" id="IPR046348">
    <property type="entry name" value="SIS_dom_sf"/>
</dbReference>
<dbReference type="NCBIfam" id="TIGR00274">
    <property type="entry name" value="N-acetylmuramic acid 6-phosphate etherase"/>
    <property type="match status" value="1"/>
</dbReference>
<dbReference type="NCBIfam" id="NF003915">
    <property type="entry name" value="PRK05441.1"/>
    <property type="match status" value="1"/>
</dbReference>
<dbReference type="NCBIfam" id="NF009222">
    <property type="entry name" value="PRK12570.1"/>
    <property type="match status" value="1"/>
</dbReference>
<dbReference type="PANTHER" id="PTHR10088">
    <property type="entry name" value="GLUCOKINASE REGULATORY PROTEIN"/>
    <property type="match status" value="1"/>
</dbReference>
<dbReference type="PANTHER" id="PTHR10088:SF4">
    <property type="entry name" value="GLUCOKINASE REGULATORY PROTEIN"/>
    <property type="match status" value="1"/>
</dbReference>
<dbReference type="Pfam" id="PF22645">
    <property type="entry name" value="GKRP_SIS_N"/>
    <property type="match status" value="1"/>
</dbReference>
<dbReference type="SUPFAM" id="SSF53697">
    <property type="entry name" value="SIS domain"/>
    <property type="match status" value="1"/>
</dbReference>
<dbReference type="PROSITE" id="PS01272">
    <property type="entry name" value="GCKR"/>
    <property type="match status" value="1"/>
</dbReference>
<dbReference type="PROSITE" id="PS51464">
    <property type="entry name" value="SIS"/>
    <property type="match status" value="1"/>
</dbReference>
<reference key="1">
    <citation type="submission" date="2005-07" db="EMBL/GenBank/DDBJ databases">
        <title>Complete sequence of Synechococcus sp. CC9605.</title>
        <authorList>
            <consortium name="US DOE Joint Genome Institute"/>
            <person name="Copeland A."/>
            <person name="Lucas S."/>
            <person name="Lapidus A."/>
            <person name="Barry K."/>
            <person name="Detter J.C."/>
            <person name="Glavina T."/>
            <person name="Hammon N."/>
            <person name="Israni S."/>
            <person name="Pitluck S."/>
            <person name="Schmutz J."/>
            <person name="Martinez M."/>
            <person name="Larimer F."/>
            <person name="Land M."/>
            <person name="Kyrpides N."/>
            <person name="Ivanova N."/>
            <person name="Richardson P."/>
        </authorList>
    </citation>
    <scope>NUCLEOTIDE SEQUENCE [LARGE SCALE GENOMIC DNA]</scope>
    <source>
        <strain>CC9605</strain>
    </source>
</reference>
<evidence type="ECO:0000255" key="1">
    <source>
        <dbReference type="HAMAP-Rule" id="MF_00068"/>
    </source>
</evidence>
<evidence type="ECO:0000256" key="2">
    <source>
        <dbReference type="SAM" id="MobiDB-lite"/>
    </source>
</evidence>
<sequence>MAVFDPDLQPSSDRGHLLTEQSNQRSSHLDQLDTLALLELFADEDRRPQEAVAAVAPALAQAVDAVANRLRAGGRLFYLGAGTSGRLGVLDAAECPPTFCSDPQQVQGVLAGGSAALLRSSEGLEDIEAAGRADLEERGFSTKDCLVGIAAGGTTPYVRGGLAFAKSIGALAIALACVPTEQAPLPCDIDIRLLTGPELLTGSTRMKAGTATKLALNTLSTAVMVKLGKVYGNRMVDVAASNSKLVDRSLRILRDLAGVERERGLTLLEEAGGSVKLALLMAAAGLSVDQAKAHLQQYDQQLRPALAAYGAQLAEA</sequence>
<protein>
    <recommendedName>
        <fullName evidence="1">N-acetylmuramic acid 6-phosphate etherase</fullName>
        <shortName evidence="1">MurNAc-6-P etherase</shortName>
        <ecNumber evidence="1">4.2.1.126</ecNumber>
    </recommendedName>
    <alternativeName>
        <fullName evidence="1">N-acetylmuramic acid 6-phosphate hydrolase</fullName>
    </alternativeName>
    <alternativeName>
        <fullName evidence="1">N-acetylmuramic acid 6-phosphate lyase</fullName>
    </alternativeName>
</protein>